<gene>
    <name type="primary">RBR2</name>
    <name type="synonym">PGA21</name>
    <name type="ordered locus">CAALFM_CR04420CA</name>
    <name type="ORF">CaO19.532</name>
    <name type="ORF">CaO19.8165</name>
</gene>
<sequence>MRFAFTTVSLSLLLSSLVASDAASSDVQFLTALVGDYQDHKTDYIKFFATAKDVPGDLSTLATKVLTYTDDSYTTLLNDDSLNVSNLEAYATSLPWYSRIQADAGGKGSASGSASGSGSAKSTASAEKSSGSSASASSTAGGSSSKGGVSELVAPVGAVVGALAVALM</sequence>
<keyword id="KW-0134">Cell wall</keyword>
<keyword id="KW-0325">Glycoprotein</keyword>
<keyword id="KW-0336">GPI-anchor</keyword>
<keyword id="KW-0378">Hydrolase</keyword>
<keyword id="KW-0449">Lipoprotein</keyword>
<keyword id="KW-0472">Membrane</keyword>
<keyword id="KW-1185">Reference proteome</keyword>
<keyword id="KW-0964">Secreted</keyword>
<keyword id="KW-0732">Signal</keyword>
<evidence type="ECO:0000250" key="1"/>
<evidence type="ECO:0000255" key="2"/>
<evidence type="ECO:0000256" key="3">
    <source>
        <dbReference type="SAM" id="MobiDB-lite"/>
    </source>
</evidence>
<evidence type="ECO:0000269" key="4">
    <source>
    </source>
</evidence>
<evidence type="ECO:0000269" key="5">
    <source>
    </source>
</evidence>
<evidence type="ECO:0000269" key="6">
    <source>
    </source>
</evidence>
<evidence type="ECO:0000269" key="7">
    <source>
    </source>
</evidence>
<evidence type="ECO:0000305" key="8"/>
<accession>Q5A6M2</accession>
<accession>A0A1D8PST4</accession>
<accession>Q5A6W7</accession>
<protein>
    <recommendedName>
        <fullName>Repressed By RIM101 protein 2</fullName>
        <ecNumber>3.1.1.-</ecNumber>
    </recommendedName>
    <alternativeName>
        <fullName>Predicted GPI-anchored protein 21</fullName>
    </alternativeName>
</protein>
<name>RBR2_CANAL</name>
<comment type="function">
    <text evidence="1">Probable cell wall protein which may have esterase activity, with a preference for esters of fatty acids from 4 to 16 carbon atoms.</text>
</comment>
<comment type="subcellular location">
    <subcellularLocation>
        <location evidence="1">Secreted</location>
        <location evidence="1">Cell wall</location>
    </subcellularLocation>
    <subcellularLocation>
        <location evidence="8">Membrane</location>
        <topology evidence="8">Lipid-anchor</topology>
        <topology evidence="8">GPI-anchor</topology>
    </subcellularLocation>
</comment>
<comment type="induction">
    <text evidence="4 5 6 7">Expression is regulated upon white-opaque switching. Repressed by RIM101 and alpha pheromone, and up-regulated upon interaction with macrophages.</text>
</comment>
<comment type="PTM">
    <text evidence="1">The GPI-anchor is attached to the protein in the endoplasmic reticulum and serves to target the protein to the cell surface. There, the glucosamine-inositol phospholipid moiety is cleaved off and the GPI-modified mannoprotein is covalently attached via its lipidless GPI glycan remnant to the 1,6-beta-glucan of the outer cell wall layer (By similarity).</text>
</comment>
<comment type="similarity">
    <text evidence="8">Belongs to the SRP1/TIP1 family.</text>
</comment>
<organism>
    <name type="scientific">Candida albicans (strain SC5314 / ATCC MYA-2876)</name>
    <name type="common">Yeast</name>
    <dbReference type="NCBI Taxonomy" id="237561"/>
    <lineage>
        <taxon>Eukaryota</taxon>
        <taxon>Fungi</taxon>
        <taxon>Dikarya</taxon>
        <taxon>Ascomycota</taxon>
        <taxon>Saccharomycotina</taxon>
        <taxon>Pichiomycetes</taxon>
        <taxon>Debaryomycetaceae</taxon>
        <taxon>Candida/Lodderomyces clade</taxon>
        <taxon>Candida</taxon>
    </lineage>
</organism>
<dbReference type="EC" id="3.1.1.-"/>
<dbReference type="EMBL" id="CP017630">
    <property type="protein sequence ID" value="AOW31179.1"/>
    <property type="molecule type" value="Genomic_DNA"/>
</dbReference>
<dbReference type="RefSeq" id="XP_717395.2">
    <property type="nucleotide sequence ID" value="XM_712302.2"/>
</dbReference>
<dbReference type="SMR" id="Q5A6M2"/>
<dbReference type="STRING" id="237561.Q5A6M2"/>
<dbReference type="GlyCosmos" id="Q5A6M2">
    <property type="glycosylation" value="1 site, No reported glycans"/>
</dbReference>
<dbReference type="EnsemblFungi" id="CR_04420C_A-T">
    <property type="protein sequence ID" value="CR_04420C_A-T-p1"/>
    <property type="gene ID" value="CR_04420C_A"/>
</dbReference>
<dbReference type="GeneID" id="3640983"/>
<dbReference type="KEGG" id="cal:CAALFM_CR04420CA"/>
<dbReference type="CGD" id="CAL0000175612">
    <property type="gene designation" value="RBR2"/>
</dbReference>
<dbReference type="VEuPathDB" id="FungiDB:CR_04420C_A"/>
<dbReference type="eggNOG" id="ENOG502RZ9R">
    <property type="taxonomic scope" value="Eukaryota"/>
</dbReference>
<dbReference type="HOGENOM" id="CLU_129392_0_0_1"/>
<dbReference type="InParanoid" id="Q5A6M2"/>
<dbReference type="OMA" id="ATELPWY"/>
<dbReference type="OrthoDB" id="4069694at2759"/>
<dbReference type="PRO" id="PR:Q5A6M2"/>
<dbReference type="Proteomes" id="UP000000559">
    <property type="component" value="Chromosome R"/>
</dbReference>
<dbReference type="GO" id="GO:0005576">
    <property type="term" value="C:extracellular region"/>
    <property type="evidence" value="ECO:0007669"/>
    <property type="project" value="UniProtKB-KW"/>
</dbReference>
<dbReference type="GO" id="GO:0098552">
    <property type="term" value="C:side of membrane"/>
    <property type="evidence" value="ECO:0007669"/>
    <property type="project" value="UniProtKB-KW"/>
</dbReference>
<dbReference type="GO" id="GO:0016787">
    <property type="term" value="F:hydrolase activity"/>
    <property type="evidence" value="ECO:0007669"/>
    <property type="project" value="UniProtKB-KW"/>
</dbReference>
<dbReference type="InterPro" id="IPR000992">
    <property type="entry name" value="SRP1_TIP1"/>
</dbReference>
<dbReference type="Pfam" id="PF00660">
    <property type="entry name" value="SRP1_TIP1"/>
    <property type="match status" value="1"/>
</dbReference>
<feature type="signal peptide" evidence="2">
    <location>
        <begin position="1"/>
        <end position="24"/>
    </location>
</feature>
<feature type="chain" id="PRO_0000424781" description="Repressed By RIM101 protein 2">
    <location>
        <begin position="25"/>
        <end position="143"/>
    </location>
</feature>
<feature type="propeptide" id="PRO_0000424782" description="Removed in mature form" evidence="2">
    <location>
        <begin position="144"/>
        <end position="168"/>
    </location>
</feature>
<feature type="region of interest" description="Disordered" evidence="3">
    <location>
        <begin position="111"/>
        <end position="149"/>
    </location>
</feature>
<feature type="lipid moiety-binding region" description="GPI-anchor amidated serine" evidence="2">
    <location>
        <position position="143"/>
    </location>
</feature>
<feature type="glycosylation site" description="N-linked (GlcNAc...) asparagine" evidence="2">
    <location>
        <position position="83"/>
    </location>
</feature>
<reference key="1">
    <citation type="journal article" date="2004" name="Proc. Natl. Acad. Sci. U.S.A.">
        <title>The diploid genome sequence of Candida albicans.</title>
        <authorList>
            <person name="Jones T."/>
            <person name="Federspiel N.A."/>
            <person name="Chibana H."/>
            <person name="Dungan J."/>
            <person name="Kalman S."/>
            <person name="Magee B.B."/>
            <person name="Newport G."/>
            <person name="Thorstenson Y.R."/>
            <person name="Agabian N."/>
            <person name="Magee P.T."/>
            <person name="Davis R.W."/>
            <person name="Scherer S."/>
        </authorList>
    </citation>
    <scope>NUCLEOTIDE SEQUENCE [LARGE SCALE GENOMIC DNA]</scope>
    <source>
        <strain>SC5314 / ATCC MYA-2876</strain>
    </source>
</reference>
<reference key="2">
    <citation type="journal article" date="2007" name="Genome Biol.">
        <title>Assembly of the Candida albicans genome into sixteen supercontigs aligned on the eight chromosomes.</title>
        <authorList>
            <person name="van het Hoog M."/>
            <person name="Rast T.J."/>
            <person name="Martchenko M."/>
            <person name="Grindle S."/>
            <person name="Dignard D."/>
            <person name="Hogues H."/>
            <person name="Cuomo C."/>
            <person name="Berriman M."/>
            <person name="Scherer S."/>
            <person name="Magee B.B."/>
            <person name="Whiteway M."/>
            <person name="Chibana H."/>
            <person name="Nantel A."/>
            <person name="Magee P.T."/>
        </authorList>
    </citation>
    <scope>GENOME REANNOTATION</scope>
    <source>
        <strain>SC5314 / ATCC MYA-2876</strain>
    </source>
</reference>
<reference key="3">
    <citation type="journal article" date="2013" name="Genome Biol.">
        <title>Assembly of a phased diploid Candida albicans genome facilitates allele-specific measurements and provides a simple model for repeat and indel structure.</title>
        <authorList>
            <person name="Muzzey D."/>
            <person name="Schwartz K."/>
            <person name="Weissman J.S."/>
            <person name="Sherlock G."/>
        </authorList>
    </citation>
    <scope>NUCLEOTIDE SEQUENCE [LARGE SCALE GENOMIC DNA]</scope>
    <scope>GENOME REANNOTATION</scope>
    <source>
        <strain>SC5314 / ATCC MYA-2876</strain>
    </source>
</reference>
<reference key="4">
    <citation type="journal article" date="2002" name="Proc. Natl. Acad. Sci. U.S.A.">
        <title>Metabolic specialization associated with phenotypic switching in Candidaalbicans.</title>
        <authorList>
            <person name="Lan C.Y."/>
            <person name="Newport G."/>
            <person name="Murillo L.A."/>
            <person name="Jones T."/>
            <person name="Scherer S."/>
            <person name="Davis R.W."/>
            <person name="Agabian N."/>
        </authorList>
    </citation>
    <scope>INDUCTION</scope>
</reference>
<reference key="5">
    <citation type="journal article" date="2003" name="Yeast">
        <title>Genome-wide identification of fungal GPI proteins.</title>
        <authorList>
            <person name="De Groot P.W."/>
            <person name="Hellingwerf K.J."/>
            <person name="Klis F.M."/>
        </authorList>
    </citation>
    <scope>PREDICTION OF GPI-ANCHOR</scope>
</reference>
<reference key="6">
    <citation type="journal article" date="2004" name="Eukaryot. Cell">
        <title>RBR1, a novel pH-regulated cell wall gene of Candida albicans, is repressed by RIM101 and activated by NRG1.</title>
        <authorList>
            <person name="Lotz H."/>
            <person name="Sohn K."/>
            <person name="Brunner H."/>
            <person name="Muhlschlegel F.A."/>
            <person name="Rupp S."/>
        </authorList>
    </citation>
    <scope>INDUCTION</scope>
</reference>
<reference key="7">
    <citation type="journal article" date="2006" name="Mol. Microbiol.">
        <title>The role of nutrient regulation and the Gpa2 protein in the mating pheromone response of C. albicans.</title>
        <authorList>
            <person name="Bennett R.J."/>
            <person name="Johnson A.D."/>
        </authorList>
    </citation>
    <scope>INDUCTION</scope>
</reference>
<reference key="8">
    <citation type="journal article" date="2007" name="Mol. Cell. Proteomics">
        <title>Integrated proteomics and genomics strategies bring new insight into Candida albicans response upon macrophage interaction.</title>
        <authorList>
            <person name="Fernandez-Arenas E."/>
            <person name="Cabezon V."/>
            <person name="Bermejo C."/>
            <person name="Arroyo J."/>
            <person name="Nombela C."/>
            <person name="Diez-Orejas R."/>
            <person name="Gil C."/>
        </authorList>
    </citation>
    <scope>INDUCTION</scope>
</reference>
<proteinExistence type="evidence at protein level"/>